<feature type="chain" id="PRO_0000162073" description="tRNA-dihydrouridine(20/20a) synthase">
    <location>
        <begin position="1"/>
        <end position="332"/>
    </location>
</feature>
<feature type="active site" description="Proton donor" evidence="1">
    <location>
        <position position="101"/>
    </location>
</feature>
<feature type="binding site" evidence="1">
    <location>
        <begin position="19"/>
        <end position="21"/>
    </location>
    <ligand>
        <name>FMN</name>
        <dbReference type="ChEBI" id="CHEBI:58210"/>
    </ligand>
</feature>
<feature type="binding site" evidence="1">
    <location>
        <position position="71"/>
    </location>
    <ligand>
        <name>FMN</name>
        <dbReference type="ChEBI" id="CHEBI:58210"/>
    </ligand>
</feature>
<feature type="binding site" evidence="1">
    <location>
        <position position="140"/>
    </location>
    <ligand>
        <name>FMN</name>
        <dbReference type="ChEBI" id="CHEBI:58210"/>
    </ligand>
</feature>
<feature type="binding site" evidence="1">
    <location>
        <position position="173"/>
    </location>
    <ligand>
        <name>FMN</name>
        <dbReference type="ChEBI" id="CHEBI:58210"/>
    </ligand>
</feature>
<feature type="binding site" evidence="1">
    <location>
        <begin position="213"/>
        <end position="215"/>
    </location>
    <ligand>
        <name>FMN</name>
        <dbReference type="ChEBI" id="CHEBI:58210"/>
    </ligand>
</feature>
<feature type="binding site" evidence="1">
    <location>
        <begin position="235"/>
        <end position="236"/>
    </location>
    <ligand>
        <name>FMN</name>
        <dbReference type="ChEBI" id="CHEBI:58210"/>
    </ligand>
</feature>
<feature type="site" description="Interacts with tRNA" evidence="1">
    <location>
        <position position="98"/>
    </location>
</feature>
<feature type="site" description="Interacts with tRNA; defines subfamily-specific binding signature" evidence="1">
    <location>
        <position position="185"/>
    </location>
</feature>
<feature type="site" description="Interacts with tRNA" evidence="1">
    <location>
        <position position="188"/>
    </location>
</feature>
<feature type="site" description="Interacts with tRNA; defines subfamily-specific binding signature" evidence="1">
    <location>
        <position position="301"/>
    </location>
</feature>
<feature type="site" description="Interacts with tRNA; defines subfamily-specific binding signature" evidence="1">
    <location>
        <position position="304"/>
    </location>
</feature>
<keyword id="KW-0285">Flavoprotein</keyword>
<keyword id="KW-0288">FMN</keyword>
<keyword id="KW-0521">NADP</keyword>
<keyword id="KW-0560">Oxidoreductase</keyword>
<keyword id="KW-1185">Reference proteome</keyword>
<keyword id="KW-0694">RNA-binding</keyword>
<keyword id="KW-0819">tRNA processing</keyword>
<keyword id="KW-0820">tRNA-binding</keyword>
<accession>Q8ZKH4</accession>
<comment type="function">
    <text evidence="1">Catalyzes the synthesis of 5,6-dihydrouridine (D), a modified base found in the D-loop of most tRNAs, via the reduction of the C5-C6 double bond in target uridines. Specifically modifies U20 and U20a in tRNAs.</text>
</comment>
<comment type="catalytic activity">
    <reaction evidence="1">
        <text>5,6-dihydrouridine(20) in tRNA + NADP(+) = uridine(20) in tRNA + NADPH + H(+)</text>
        <dbReference type="Rhea" id="RHEA:53336"/>
        <dbReference type="Rhea" id="RHEA-COMP:13533"/>
        <dbReference type="Rhea" id="RHEA-COMP:13534"/>
        <dbReference type="ChEBI" id="CHEBI:15378"/>
        <dbReference type="ChEBI" id="CHEBI:57783"/>
        <dbReference type="ChEBI" id="CHEBI:58349"/>
        <dbReference type="ChEBI" id="CHEBI:65315"/>
        <dbReference type="ChEBI" id="CHEBI:74443"/>
        <dbReference type="EC" id="1.3.1.91"/>
    </reaction>
</comment>
<comment type="catalytic activity">
    <reaction evidence="1">
        <text>5,6-dihydrouridine(20) in tRNA + NAD(+) = uridine(20) in tRNA + NADH + H(+)</text>
        <dbReference type="Rhea" id="RHEA:53340"/>
        <dbReference type="Rhea" id="RHEA-COMP:13533"/>
        <dbReference type="Rhea" id="RHEA-COMP:13534"/>
        <dbReference type="ChEBI" id="CHEBI:15378"/>
        <dbReference type="ChEBI" id="CHEBI:57540"/>
        <dbReference type="ChEBI" id="CHEBI:57945"/>
        <dbReference type="ChEBI" id="CHEBI:65315"/>
        <dbReference type="ChEBI" id="CHEBI:74443"/>
        <dbReference type="EC" id="1.3.1.91"/>
    </reaction>
</comment>
<comment type="catalytic activity">
    <reaction evidence="1">
        <text>5,6-dihydrouridine(20a) in tRNA + NADP(+) = uridine(20a) in tRNA + NADPH + H(+)</text>
        <dbReference type="Rhea" id="RHEA:53344"/>
        <dbReference type="Rhea" id="RHEA-COMP:13535"/>
        <dbReference type="Rhea" id="RHEA-COMP:13536"/>
        <dbReference type="ChEBI" id="CHEBI:15378"/>
        <dbReference type="ChEBI" id="CHEBI:57783"/>
        <dbReference type="ChEBI" id="CHEBI:58349"/>
        <dbReference type="ChEBI" id="CHEBI:65315"/>
        <dbReference type="ChEBI" id="CHEBI:74443"/>
    </reaction>
</comment>
<comment type="catalytic activity">
    <reaction evidence="1">
        <text>5,6-dihydrouridine(20a) in tRNA + NAD(+) = uridine(20a) in tRNA + NADH + H(+)</text>
        <dbReference type="Rhea" id="RHEA:53348"/>
        <dbReference type="Rhea" id="RHEA-COMP:13535"/>
        <dbReference type="Rhea" id="RHEA-COMP:13536"/>
        <dbReference type="ChEBI" id="CHEBI:15378"/>
        <dbReference type="ChEBI" id="CHEBI:57540"/>
        <dbReference type="ChEBI" id="CHEBI:57945"/>
        <dbReference type="ChEBI" id="CHEBI:65315"/>
        <dbReference type="ChEBI" id="CHEBI:74443"/>
    </reaction>
</comment>
<comment type="cofactor">
    <cofactor evidence="1">
        <name>FMN</name>
        <dbReference type="ChEBI" id="CHEBI:58210"/>
    </cofactor>
</comment>
<comment type="similarity">
    <text evidence="1">Belongs to the Dus family. DusA subfamily.</text>
</comment>
<gene>
    <name evidence="1" type="primary">dusA</name>
    <name type="ordered locus">STM4243</name>
</gene>
<organism>
    <name type="scientific">Salmonella typhimurium (strain LT2 / SGSC1412 / ATCC 700720)</name>
    <dbReference type="NCBI Taxonomy" id="99287"/>
    <lineage>
        <taxon>Bacteria</taxon>
        <taxon>Pseudomonadati</taxon>
        <taxon>Pseudomonadota</taxon>
        <taxon>Gammaproteobacteria</taxon>
        <taxon>Enterobacterales</taxon>
        <taxon>Enterobacteriaceae</taxon>
        <taxon>Salmonella</taxon>
    </lineage>
</organism>
<proteinExistence type="inferred from homology"/>
<reference key="1">
    <citation type="journal article" date="2001" name="Nature">
        <title>Complete genome sequence of Salmonella enterica serovar Typhimurium LT2.</title>
        <authorList>
            <person name="McClelland M."/>
            <person name="Sanderson K.E."/>
            <person name="Spieth J."/>
            <person name="Clifton S.W."/>
            <person name="Latreille P."/>
            <person name="Courtney L."/>
            <person name="Porwollik S."/>
            <person name="Ali J."/>
            <person name="Dante M."/>
            <person name="Du F."/>
            <person name="Hou S."/>
            <person name="Layman D."/>
            <person name="Leonard S."/>
            <person name="Nguyen C."/>
            <person name="Scott K."/>
            <person name="Holmes A."/>
            <person name="Grewal N."/>
            <person name="Mulvaney E."/>
            <person name="Ryan E."/>
            <person name="Sun H."/>
            <person name="Florea L."/>
            <person name="Miller W."/>
            <person name="Stoneking T."/>
            <person name="Nhan M."/>
            <person name="Waterston R."/>
            <person name="Wilson R.K."/>
        </authorList>
    </citation>
    <scope>NUCLEOTIDE SEQUENCE [LARGE SCALE GENOMIC DNA]</scope>
    <source>
        <strain>LT2 / SGSC1412 / ATCC 700720</strain>
    </source>
</reference>
<sequence>MQPETQSSALPAYRFSIAPMLDWTDRHCRYFLRLLSRQTQLYTEMVTTGAIIHGKGDYLAYSEEEHPVALQLGGSDPAQLAHCAKLAEARGYDEINLNVGCPSDRVQNGMFGACLMGNAQLVADCVKAMRDVVSIPVTVKTRIGIDDQDSYAFLCDFIDTVSGQGECEMFIIHARKAWLSGLSPKENREIPPLDYPRVYQLKRDFPHLTMSINGGIKSLEEAKEHLRHMDGVMVGREAYQNPGILAAVDREIFGADTTDADPVAVVRAMYPYIERELSQGAYLGHITRHMLGLFQGIPGARQWRRYLSENAHKAGADVAVLEQALKLVADKR</sequence>
<name>DUSA_SALTY</name>
<dbReference type="EC" id="1.3.1.-" evidence="1"/>
<dbReference type="EC" id="1.3.1.91" evidence="1"/>
<dbReference type="EMBL" id="AE006468">
    <property type="protein sequence ID" value="AAL23067.1"/>
    <property type="molecule type" value="Genomic_DNA"/>
</dbReference>
<dbReference type="RefSeq" id="WP_001182237.1">
    <property type="nucleotide sequence ID" value="NC_003197.2"/>
</dbReference>
<dbReference type="SMR" id="Q8ZKH4"/>
<dbReference type="STRING" id="99287.STM4243"/>
<dbReference type="PaxDb" id="99287-STM4243"/>
<dbReference type="KEGG" id="stm:STM4243"/>
<dbReference type="PATRIC" id="fig|99287.12.peg.4463"/>
<dbReference type="HOGENOM" id="CLU_013299_2_1_6"/>
<dbReference type="OMA" id="NNMIGAC"/>
<dbReference type="PhylomeDB" id="Q8ZKH4"/>
<dbReference type="BioCyc" id="SENT99287:STM4243-MONOMER"/>
<dbReference type="Proteomes" id="UP000001014">
    <property type="component" value="Chromosome"/>
</dbReference>
<dbReference type="GO" id="GO:0050660">
    <property type="term" value="F:flavin adenine dinucleotide binding"/>
    <property type="evidence" value="ECO:0007669"/>
    <property type="project" value="InterPro"/>
</dbReference>
<dbReference type="GO" id="GO:0010181">
    <property type="term" value="F:FMN binding"/>
    <property type="evidence" value="ECO:0007669"/>
    <property type="project" value="UniProtKB-UniRule"/>
</dbReference>
<dbReference type="GO" id="GO:0000049">
    <property type="term" value="F:tRNA binding"/>
    <property type="evidence" value="ECO:0007669"/>
    <property type="project" value="UniProtKB-UniRule"/>
</dbReference>
<dbReference type="GO" id="GO:0102264">
    <property type="term" value="F:tRNA-dihydrouridine20 synthase activity"/>
    <property type="evidence" value="ECO:0007669"/>
    <property type="project" value="UniProtKB-EC"/>
</dbReference>
<dbReference type="GO" id="GO:0102266">
    <property type="term" value="F:tRNA-dihydrouridine20a synthase activity"/>
    <property type="evidence" value="ECO:0007669"/>
    <property type="project" value="RHEA"/>
</dbReference>
<dbReference type="CDD" id="cd02801">
    <property type="entry name" value="DUS_like_FMN"/>
    <property type="match status" value="1"/>
</dbReference>
<dbReference type="FunFam" id="1.20.120.1460:FF:000001">
    <property type="entry name" value="tRNA-dihydrouridine(20/20a) synthase"/>
    <property type="match status" value="1"/>
</dbReference>
<dbReference type="FunFam" id="3.20.20.70:FF:000083">
    <property type="entry name" value="tRNA-dihydrouridine(20/20a) synthase"/>
    <property type="match status" value="1"/>
</dbReference>
<dbReference type="Gene3D" id="1.20.120.1460">
    <property type="match status" value="1"/>
</dbReference>
<dbReference type="Gene3D" id="3.20.20.70">
    <property type="entry name" value="Aldolase class I"/>
    <property type="match status" value="1"/>
</dbReference>
<dbReference type="HAMAP" id="MF_02041">
    <property type="entry name" value="DusA_subfam"/>
    <property type="match status" value="1"/>
</dbReference>
<dbReference type="InterPro" id="IPR013785">
    <property type="entry name" value="Aldolase_TIM"/>
</dbReference>
<dbReference type="InterPro" id="IPR035587">
    <property type="entry name" value="DUS-like_FMN-bd"/>
</dbReference>
<dbReference type="InterPro" id="IPR001269">
    <property type="entry name" value="DUS_fam"/>
</dbReference>
<dbReference type="InterPro" id="IPR004653">
    <property type="entry name" value="DusA"/>
</dbReference>
<dbReference type="InterPro" id="IPR018517">
    <property type="entry name" value="tRNA_hU_synthase_CS"/>
</dbReference>
<dbReference type="NCBIfam" id="NF008774">
    <property type="entry name" value="PRK11815.1"/>
    <property type="match status" value="1"/>
</dbReference>
<dbReference type="NCBIfam" id="TIGR00742">
    <property type="entry name" value="yjbN"/>
    <property type="match status" value="1"/>
</dbReference>
<dbReference type="PANTHER" id="PTHR42907">
    <property type="entry name" value="FMN-LINKED OXIDOREDUCTASES SUPERFAMILY PROTEIN"/>
    <property type="match status" value="1"/>
</dbReference>
<dbReference type="PANTHER" id="PTHR42907:SF1">
    <property type="entry name" value="FMN-LINKED OXIDOREDUCTASES SUPERFAMILY PROTEIN"/>
    <property type="match status" value="1"/>
</dbReference>
<dbReference type="Pfam" id="PF01207">
    <property type="entry name" value="Dus"/>
    <property type="match status" value="1"/>
</dbReference>
<dbReference type="PIRSF" id="PIRSF006621">
    <property type="entry name" value="Dus"/>
    <property type="match status" value="1"/>
</dbReference>
<dbReference type="SUPFAM" id="SSF51395">
    <property type="entry name" value="FMN-linked oxidoreductases"/>
    <property type="match status" value="1"/>
</dbReference>
<dbReference type="PROSITE" id="PS01136">
    <property type="entry name" value="UPF0034"/>
    <property type="match status" value="1"/>
</dbReference>
<evidence type="ECO:0000255" key="1">
    <source>
        <dbReference type="HAMAP-Rule" id="MF_02041"/>
    </source>
</evidence>
<protein>
    <recommendedName>
        <fullName evidence="1">tRNA-dihydrouridine(20/20a) synthase</fullName>
        <ecNumber evidence="1">1.3.1.-</ecNumber>
        <ecNumber evidence="1">1.3.1.91</ecNumber>
    </recommendedName>
    <alternativeName>
        <fullName evidence="1">U20-specific dihydrouridine synthase</fullName>
        <shortName evidence="1">U20-specific Dus</shortName>
    </alternativeName>
    <alternativeName>
        <fullName evidence="1">tRNA-dihydrouridine synthase A</fullName>
    </alternativeName>
</protein>